<dbReference type="EC" id="2.7.7.6" evidence="1"/>
<dbReference type="EMBL" id="Y13690">
    <property type="protein sequence ID" value="CAA74024.1"/>
    <property type="status" value="ALT_INIT"/>
    <property type="molecule type" value="Genomic_DNA"/>
</dbReference>
<dbReference type="EMBL" id="AP000423">
    <property type="protein sequence ID" value="BAA84377.1"/>
    <property type="molecule type" value="Genomic_DNA"/>
</dbReference>
<dbReference type="EMBL" id="X84159">
    <property type="protein sequence ID" value="CAA58965.1"/>
    <property type="molecule type" value="Genomic_DNA"/>
</dbReference>
<dbReference type="PIR" id="S52324">
    <property type="entry name" value="S52324"/>
</dbReference>
<dbReference type="RefSeq" id="NP_051051.1">
    <property type="nucleotide sequence ID" value="NC_000932.1"/>
</dbReference>
<dbReference type="SMR" id="P50546"/>
<dbReference type="BioGRID" id="29977">
    <property type="interactions" value="19"/>
</dbReference>
<dbReference type="FunCoup" id="P50546">
    <property type="interactions" value="226"/>
</dbReference>
<dbReference type="IntAct" id="P50546">
    <property type="interactions" value="2"/>
</dbReference>
<dbReference type="MINT" id="P50546"/>
<dbReference type="STRING" id="3702.P50546"/>
<dbReference type="PaxDb" id="3702-ATCG00190.1"/>
<dbReference type="ProteomicsDB" id="228238"/>
<dbReference type="EnsemblPlants" id="ATCG00190.1">
    <property type="protein sequence ID" value="ATCG00190.1"/>
    <property type="gene ID" value="ATCG00190"/>
</dbReference>
<dbReference type="GeneID" id="844783"/>
<dbReference type="Gramene" id="ATCG00190.1">
    <property type="protein sequence ID" value="ATCG00190.1"/>
    <property type="gene ID" value="ATCG00190"/>
</dbReference>
<dbReference type="KEGG" id="ath:ArthCp014"/>
<dbReference type="Araport" id="ATCG00190"/>
<dbReference type="TAIR" id="ATCG00190">
    <property type="gene designation" value="RPOB"/>
</dbReference>
<dbReference type="eggNOG" id="KOG0214">
    <property type="taxonomic scope" value="Eukaryota"/>
</dbReference>
<dbReference type="HOGENOM" id="CLU_000524_4_3_1"/>
<dbReference type="InParanoid" id="P50546"/>
<dbReference type="OMA" id="FMTWEGY"/>
<dbReference type="CD-CODE" id="4299E36E">
    <property type="entry name" value="Nucleolus"/>
</dbReference>
<dbReference type="PRO" id="PR:P50546"/>
<dbReference type="Proteomes" id="UP000006548">
    <property type="component" value="Chloroplast Pltd"/>
</dbReference>
<dbReference type="ExpressionAtlas" id="P50546">
    <property type="expression patterns" value="baseline and differential"/>
</dbReference>
<dbReference type="GO" id="GO:0009507">
    <property type="term" value="C:chloroplast"/>
    <property type="evidence" value="ECO:0000314"/>
    <property type="project" value="TAIR"/>
</dbReference>
<dbReference type="GO" id="GO:0042644">
    <property type="term" value="C:chloroplast nucleoid"/>
    <property type="evidence" value="ECO:0007005"/>
    <property type="project" value="TAIR"/>
</dbReference>
<dbReference type="GO" id="GO:0000428">
    <property type="term" value="C:DNA-directed RNA polymerase complex"/>
    <property type="evidence" value="ECO:0007669"/>
    <property type="project" value="UniProtKB-KW"/>
</dbReference>
<dbReference type="GO" id="GO:0005739">
    <property type="term" value="C:mitochondrion"/>
    <property type="evidence" value="ECO:0007669"/>
    <property type="project" value="GOC"/>
</dbReference>
<dbReference type="GO" id="GO:0003677">
    <property type="term" value="F:DNA binding"/>
    <property type="evidence" value="ECO:0007669"/>
    <property type="project" value="UniProtKB-UniRule"/>
</dbReference>
<dbReference type="GO" id="GO:0003899">
    <property type="term" value="F:DNA-directed RNA polymerase activity"/>
    <property type="evidence" value="ECO:0000304"/>
    <property type="project" value="TAIR"/>
</dbReference>
<dbReference type="GO" id="GO:0003729">
    <property type="term" value="F:mRNA binding"/>
    <property type="evidence" value="ECO:0000314"/>
    <property type="project" value="TAIR"/>
</dbReference>
<dbReference type="GO" id="GO:0032549">
    <property type="term" value="F:ribonucleoside binding"/>
    <property type="evidence" value="ECO:0007669"/>
    <property type="project" value="InterPro"/>
</dbReference>
<dbReference type="GO" id="GO:0006354">
    <property type="term" value="P:DNA-templated transcription elongation"/>
    <property type="evidence" value="ECO:0000304"/>
    <property type="project" value="TAIR"/>
</dbReference>
<dbReference type="CDD" id="cd00653">
    <property type="entry name" value="RNA_pol_B_RPB2"/>
    <property type="match status" value="1"/>
</dbReference>
<dbReference type="FunFam" id="2.40.50.150:FF:000006">
    <property type="entry name" value="DNA-directed RNA polymerase subunit beta"/>
    <property type="match status" value="1"/>
</dbReference>
<dbReference type="FunFam" id="3.90.1110.10:FF:000009">
    <property type="entry name" value="DNA-directed RNA polymerase subunit beta"/>
    <property type="match status" value="1"/>
</dbReference>
<dbReference type="Gene3D" id="2.40.50.100">
    <property type="match status" value="1"/>
</dbReference>
<dbReference type="Gene3D" id="2.40.50.150">
    <property type="match status" value="1"/>
</dbReference>
<dbReference type="Gene3D" id="3.90.1100.10">
    <property type="match status" value="1"/>
</dbReference>
<dbReference type="Gene3D" id="2.30.150.10">
    <property type="entry name" value="DNA-directed RNA polymerase, beta subunit, external 1 domain"/>
    <property type="match status" value="1"/>
</dbReference>
<dbReference type="Gene3D" id="2.40.270.10">
    <property type="entry name" value="DNA-directed RNA polymerase, subunit 2, domain 6"/>
    <property type="match status" value="2"/>
</dbReference>
<dbReference type="Gene3D" id="3.90.1800.10">
    <property type="entry name" value="RNA polymerase alpha subunit dimerisation domain"/>
    <property type="match status" value="1"/>
</dbReference>
<dbReference type="Gene3D" id="3.90.1110.10">
    <property type="entry name" value="RNA polymerase Rpb2, domain 2"/>
    <property type="match status" value="1"/>
</dbReference>
<dbReference type="HAMAP" id="MF_01321">
    <property type="entry name" value="RNApol_bact_RpoB"/>
    <property type="match status" value="1"/>
</dbReference>
<dbReference type="InterPro" id="IPR042107">
    <property type="entry name" value="DNA-dir_RNA_pol_bsu_ext_1_sf"/>
</dbReference>
<dbReference type="InterPro" id="IPR015712">
    <property type="entry name" value="DNA-dir_RNA_pol_su2"/>
</dbReference>
<dbReference type="InterPro" id="IPR007120">
    <property type="entry name" value="DNA-dir_RNAP_su2_dom"/>
</dbReference>
<dbReference type="InterPro" id="IPR037033">
    <property type="entry name" value="DNA-dir_RNAP_su2_hyb_sf"/>
</dbReference>
<dbReference type="InterPro" id="IPR010243">
    <property type="entry name" value="RNA_pol_bsu_bac"/>
</dbReference>
<dbReference type="InterPro" id="IPR007121">
    <property type="entry name" value="RNA_pol_bsu_CS"/>
</dbReference>
<dbReference type="InterPro" id="IPR007642">
    <property type="entry name" value="RNA_pol_Rpb2_2"/>
</dbReference>
<dbReference type="InterPro" id="IPR037034">
    <property type="entry name" value="RNA_pol_Rpb2_2_sf"/>
</dbReference>
<dbReference type="InterPro" id="IPR007645">
    <property type="entry name" value="RNA_pol_Rpb2_3"/>
</dbReference>
<dbReference type="InterPro" id="IPR007641">
    <property type="entry name" value="RNA_pol_Rpb2_7"/>
</dbReference>
<dbReference type="InterPro" id="IPR014724">
    <property type="entry name" value="RNA_pol_RPB2_OB-fold"/>
</dbReference>
<dbReference type="NCBIfam" id="NF001616">
    <property type="entry name" value="PRK00405.1"/>
    <property type="match status" value="1"/>
</dbReference>
<dbReference type="PANTHER" id="PTHR20856">
    <property type="entry name" value="DNA-DIRECTED RNA POLYMERASE I SUBUNIT 2"/>
    <property type="match status" value="1"/>
</dbReference>
<dbReference type="Pfam" id="PF04561">
    <property type="entry name" value="RNA_pol_Rpb2_2"/>
    <property type="match status" value="1"/>
</dbReference>
<dbReference type="Pfam" id="PF04565">
    <property type="entry name" value="RNA_pol_Rpb2_3"/>
    <property type="match status" value="1"/>
</dbReference>
<dbReference type="Pfam" id="PF00562">
    <property type="entry name" value="RNA_pol_Rpb2_6"/>
    <property type="match status" value="1"/>
</dbReference>
<dbReference type="Pfam" id="PF04560">
    <property type="entry name" value="RNA_pol_Rpb2_7"/>
    <property type="match status" value="1"/>
</dbReference>
<dbReference type="SUPFAM" id="SSF64484">
    <property type="entry name" value="beta and beta-prime subunits of DNA dependent RNA-polymerase"/>
    <property type="match status" value="1"/>
</dbReference>
<dbReference type="PROSITE" id="PS01166">
    <property type="entry name" value="RNA_POL_BETA"/>
    <property type="match status" value="1"/>
</dbReference>
<comment type="function">
    <text>DNA-dependent RNA polymerase catalyzes the transcription of DNA into RNA using the four ribonucleoside triphosphates as substrates.</text>
</comment>
<comment type="catalytic activity">
    <reaction evidence="1">
        <text>RNA(n) + a ribonucleoside 5'-triphosphate = RNA(n+1) + diphosphate</text>
        <dbReference type="Rhea" id="RHEA:21248"/>
        <dbReference type="Rhea" id="RHEA-COMP:14527"/>
        <dbReference type="Rhea" id="RHEA-COMP:17342"/>
        <dbReference type="ChEBI" id="CHEBI:33019"/>
        <dbReference type="ChEBI" id="CHEBI:61557"/>
        <dbReference type="ChEBI" id="CHEBI:140395"/>
        <dbReference type="EC" id="2.7.7.6"/>
    </reaction>
</comment>
<comment type="subunit">
    <text evidence="1">In plastids the minimal PEP RNA polymerase catalytic core is composed of four subunits: alpha, beta, beta', and beta''. When a (nuclear-encoded) sigma factor is associated with the core the holoenzyme is formed, which can initiate transcription.</text>
</comment>
<comment type="subcellular location">
    <subcellularLocation>
        <location>Plastid</location>
        <location>Chloroplast</location>
    </subcellularLocation>
</comment>
<comment type="similarity">
    <text evidence="1">Belongs to the RNA polymerase beta chain family.</text>
</comment>
<comment type="sequence caution" evidence="2">
    <conflict type="erroneous initiation">
        <sequence resource="EMBL-CDS" id="CAA74024"/>
    </conflict>
    <text>Extended N-terminus.</text>
</comment>
<protein>
    <recommendedName>
        <fullName evidence="1">DNA-directed RNA polymerase subunit beta</fullName>
        <ecNumber evidence="1">2.7.7.6</ecNumber>
    </recommendedName>
    <alternativeName>
        <fullName evidence="1">PEP</fullName>
    </alternativeName>
    <alternativeName>
        <fullName evidence="1">Plastid-encoded RNA polymerase subunit beta</fullName>
        <shortName evidence="1">RNA polymerase subunit beta</shortName>
    </alternativeName>
</protein>
<sequence length="1072" mass="121059">MLGDEKEGTSAIPGFNQIQFEGFYRFIDQGLIEELAKFPKIEDIDHEIEFQLFVETYQLVEPLIKERDAVYESLTYSSELYVSAGLIWKTSRNMQEQRIFIGNIPLMNSLGTSIVNGIYRIVINQILQSPGIYYQSELDHNGISVYTGTIISDWGGRLELEIDKKARIWARVSRKQKISILVLSSAMGLNLREILENVCYPEIFLSFLTDKEKKKIGSKENAILEFYQQFSCVGGDPIFSESLCKELQKKFFHQRCELGRIGRRNINWRLNLNIPQNNIFLLPRDVLAAADHLIGMKFGMGTLDDMNHLKNKRIRSVADLLQDQLGLALARLENVVKGTISGAIRHKLIPTPQNLVTSTPLTTTYESFFGLHPLSQVLDRTNPLTQIVHGRKLSYLGPGGLTGRTANFRIRDIHPSHYGRICPIDTSEGINVGLIGSLSIHARIGDWGSLESPFYELFEKSKKARIRMLFLSPSQDEYYMIAAGNSLALNRGIQEEQAVPARYRQEFLTIAWEEVHLRSIFPFQYFSIGASLIPFIEHNDANRALMSSNMQRQAVPLSRSEKCIVGTGLERQVALDSGVPAIAEHEGKILYTDTEKIVFSGNGDTLSIPLIMYQRSNKNTCMHQKPQVRRGKCIKKGQILADGAATVGGELALGKNILVAYMPWEGYNFEDAVLISECLVYGDIYTSFHIRKYEIQTHVTTQGPERITKEIPHLEGRLLRNLDKNGIVMLGSWVETGDILVGKLTPQVAKESSYAPEDRLLRAILGIQVSTSKETCLKLPIGGRGRVIDVRWVQKKGGSSYNPEIIRVYISQKREIKVGDKVAGRHGNKGIISKILPRQDMPYLQDGRPVDMVFNPLGVPSRMNVGQIFECSLGLAGSLLDRHYRIAPFDERYEQEASRKLVFSELYEASKQTANPWVFEPEYPGKSRIFDGRTGDPFEQPVIIGKPYILKLIHQVDDKIHGRSSGHYALVTQQPLRGRSKQGGQRVGEMEVWALEGFGVAHILQEMLTYKSDHIRARQEVLGTTIIGGTIPKPEDAPESFRLLVRELRSLALELNHFLVSEKNFQINRKEV</sequence>
<reference key="1">
    <citation type="journal article" date="2000" name="Eur. J. Biochem.">
        <title>The multisubunit chloroplast RNA polymerase A from mustard (Sinapis alba L.). Integration of a prokaryotic core into a larger complex with organelle-specific functions.</title>
        <authorList>
            <person name="Pfannschmidt T."/>
            <person name="Ogrzewalla K."/>
            <person name="Baginsky S."/>
            <person name="Sickmann A."/>
            <person name="Meyer H.E."/>
            <person name="Link G."/>
        </authorList>
    </citation>
    <scope>NUCLEOTIDE SEQUENCE [GENOMIC DNA]</scope>
    <source>
        <strain>cv. Landsberg erecta</strain>
        <tissue>Leaf</tissue>
    </source>
</reference>
<reference key="2">
    <citation type="journal article" date="1999" name="DNA Res.">
        <title>Complete structure of the chloroplast genome of Arabidopsis thaliana.</title>
        <authorList>
            <person name="Sato S."/>
            <person name="Nakamura Y."/>
            <person name="Kaneko T."/>
            <person name="Asamizu E."/>
            <person name="Tabata S."/>
        </authorList>
    </citation>
    <scope>NUCLEOTIDE SEQUENCE [LARGE SCALE GENOMIC DNA]</scope>
    <source>
        <strain>cv. Columbia</strain>
    </source>
</reference>
<reference key="3">
    <citation type="submission" date="1995-02" db="EMBL/GenBank/DDBJ databases">
        <authorList>
            <person name="Knut J."/>
            <person name="Pfannschmidt T."/>
            <person name="Liere K."/>
            <person name="Link G."/>
        </authorList>
    </citation>
    <scope>NUCLEOTIDE SEQUENCE [GENOMIC DNA] OF 346-713</scope>
    <source>
        <strain>cv. Landsberg erecta</strain>
        <tissue>Cotyledon</tissue>
    </source>
</reference>
<evidence type="ECO:0000255" key="1">
    <source>
        <dbReference type="HAMAP-Rule" id="MF_01321"/>
    </source>
</evidence>
<evidence type="ECO:0000305" key="2"/>
<gene>
    <name evidence="1" type="primary">rpoB</name>
    <name type="ordered locus">AtCg00190</name>
</gene>
<feature type="chain" id="PRO_0000048011" description="DNA-directed RNA polymerase subunit beta">
    <location>
        <begin position="1"/>
        <end position="1072"/>
    </location>
</feature>
<feature type="sequence conflict" description="In Ref. 1; CAA74024." evidence="2" ref="1">
    <original>V</original>
    <variation>I</variation>
    <location>
        <position position="286"/>
    </location>
</feature>
<feature type="sequence conflict" description="In Ref. 1; CAA74024." evidence="2" ref="1">
    <original>S</original>
    <variation>G</variation>
    <location>
        <position position="341"/>
    </location>
</feature>
<feature type="sequence conflict" description="In Ref. 1; CAA74024 and 3; CAA58965." evidence="2" ref="1 3">
    <original>H</original>
    <variation>Y</variation>
    <location>
        <position position="346"/>
    </location>
</feature>
<feature type="sequence conflict" description="In Ref. 1; CAA74024 and 3; CAA58965." evidence="2" ref="1 3">
    <original>F</original>
    <variation>L</variation>
    <location>
        <position position="599"/>
    </location>
</feature>
<feature type="sequence conflict" description="In Ref. 1; CAA74024." evidence="2" ref="1">
    <original>S</original>
    <variation>T</variation>
    <location>
        <position position="927"/>
    </location>
</feature>
<feature type="sequence conflict" description="In Ref. 1; CAA74024." evidence="2" ref="1">
    <original>DK</original>
    <variation>VI</variation>
    <location>
        <begin position="958"/>
        <end position="959"/>
    </location>
</feature>
<feature type="sequence conflict" description="In Ref. 1; CAA74024." evidence="2" ref="1">
    <original>P</original>
    <variation>Q</variation>
    <location>
        <position position="1038"/>
    </location>
</feature>
<keyword id="KW-0150">Chloroplast</keyword>
<keyword id="KW-0240">DNA-directed RNA polymerase</keyword>
<keyword id="KW-0548">Nucleotidyltransferase</keyword>
<keyword id="KW-0934">Plastid</keyword>
<keyword id="KW-1185">Reference proteome</keyword>
<keyword id="KW-0804">Transcription</keyword>
<keyword id="KW-0808">Transferase</keyword>
<accession>P50546</accession>
<geneLocation type="chloroplast"/>
<organism>
    <name type="scientific">Arabidopsis thaliana</name>
    <name type="common">Mouse-ear cress</name>
    <dbReference type="NCBI Taxonomy" id="3702"/>
    <lineage>
        <taxon>Eukaryota</taxon>
        <taxon>Viridiplantae</taxon>
        <taxon>Streptophyta</taxon>
        <taxon>Embryophyta</taxon>
        <taxon>Tracheophyta</taxon>
        <taxon>Spermatophyta</taxon>
        <taxon>Magnoliopsida</taxon>
        <taxon>eudicotyledons</taxon>
        <taxon>Gunneridae</taxon>
        <taxon>Pentapetalae</taxon>
        <taxon>rosids</taxon>
        <taxon>malvids</taxon>
        <taxon>Brassicales</taxon>
        <taxon>Brassicaceae</taxon>
        <taxon>Camelineae</taxon>
        <taxon>Arabidopsis</taxon>
    </lineage>
</organism>
<proteinExistence type="inferred from homology"/>
<name>RPOB_ARATH</name>